<proteinExistence type="inferred from homology"/>
<name>HSCA_BURM7</name>
<gene>
    <name evidence="1" type="primary">hscA</name>
    <name type="ordered locus">BMA10247_1485</name>
</gene>
<keyword id="KW-0067">ATP-binding</keyword>
<keyword id="KW-0143">Chaperone</keyword>
<keyword id="KW-0547">Nucleotide-binding</keyword>
<comment type="function">
    <text evidence="1">Chaperone involved in the maturation of iron-sulfur cluster-containing proteins. Has a low intrinsic ATPase activity which is markedly stimulated by HscB.</text>
</comment>
<comment type="similarity">
    <text evidence="1">Belongs to the heat shock protein 70 family.</text>
</comment>
<accession>A3ML96</accession>
<evidence type="ECO:0000255" key="1">
    <source>
        <dbReference type="HAMAP-Rule" id="MF_00679"/>
    </source>
</evidence>
<organism>
    <name type="scientific">Burkholderia mallei (strain NCTC 10247)</name>
    <dbReference type="NCBI Taxonomy" id="320389"/>
    <lineage>
        <taxon>Bacteria</taxon>
        <taxon>Pseudomonadati</taxon>
        <taxon>Pseudomonadota</taxon>
        <taxon>Betaproteobacteria</taxon>
        <taxon>Burkholderiales</taxon>
        <taxon>Burkholderiaceae</taxon>
        <taxon>Burkholderia</taxon>
        <taxon>pseudomallei group</taxon>
    </lineage>
</organism>
<reference key="1">
    <citation type="journal article" date="2010" name="Genome Biol. Evol.">
        <title>Continuing evolution of Burkholderia mallei through genome reduction and large-scale rearrangements.</title>
        <authorList>
            <person name="Losada L."/>
            <person name="Ronning C.M."/>
            <person name="DeShazer D."/>
            <person name="Woods D."/>
            <person name="Fedorova N."/>
            <person name="Kim H.S."/>
            <person name="Shabalina S.A."/>
            <person name="Pearson T.R."/>
            <person name="Brinkac L."/>
            <person name="Tan P."/>
            <person name="Nandi T."/>
            <person name="Crabtree J."/>
            <person name="Badger J."/>
            <person name="Beckstrom-Sternberg S."/>
            <person name="Saqib M."/>
            <person name="Schutzer S.E."/>
            <person name="Keim P."/>
            <person name="Nierman W.C."/>
        </authorList>
    </citation>
    <scope>NUCLEOTIDE SEQUENCE [LARGE SCALE GENOMIC DNA]</scope>
    <source>
        <strain>NCTC 10247</strain>
    </source>
</reference>
<feature type="chain" id="PRO_1000044846" description="Chaperone protein HscA homolog">
    <location>
        <begin position="1"/>
        <end position="622"/>
    </location>
</feature>
<dbReference type="EMBL" id="CP000548">
    <property type="protein sequence ID" value="ABO05326.1"/>
    <property type="molecule type" value="Genomic_DNA"/>
</dbReference>
<dbReference type="RefSeq" id="WP_004193590.1">
    <property type="nucleotide sequence ID" value="NZ_CP007802.1"/>
</dbReference>
<dbReference type="SMR" id="A3ML96"/>
<dbReference type="GeneID" id="92979425"/>
<dbReference type="KEGG" id="bmn:BMA10247_1485"/>
<dbReference type="GO" id="GO:0005524">
    <property type="term" value="F:ATP binding"/>
    <property type="evidence" value="ECO:0007669"/>
    <property type="project" value="UniProtKB-KW"/>
</dbReference>
<dbReference type="GO" id="GO:0016887">
    <property type="term" value="F:ATP hydrolysis activity"/>
    <property type="evidence" value="ECO:0007669"/>
    <property type="project" value="UniProtKB-UniRule"/>
</dbReference>
<dbReference type="GO" id="GO:0140662">
    <property type="term" value="F:ATP-dependent protein folding chaperone"/>
    <property type="evidence" value="ECO:0007669"/>
    <property type="project" value="InterPro"/>
</dbReference>
<dbReference type="GO" id="GO:0051082">
    <property type="term" value="F:unfolded protein binding"/>
    <property type="evidence" value="ECO:0007669"/>
    <property type="project" value="InterPro"/>
</dbReference>
<dbReference type="GO" id="GO:0016226">
    <property type="term" value="P:iron-sulfur cluster assembly"/>
    <property type="evidence" value="ECO:0007669"/>
    <property type="project" value="InterPro"/>
</dbReference>
<dbReference type="FunFam" id="3.30.420.40:FF:000046">
    <property type="entry name" value="Chaperone protein HscA"/>
    <property type="match status" value="1"/>
</dbReference>
<dbReference type="FunFam" id="2.60.34.10:FF:000005">
    <property type="entry name" value="Chaperone protein HscA homolog"/>
    <property type="match status" value="1"/>
</dbReference>
<dbReference type="Gene3D" id="1.20.1270.10">
    <property type="match status" value="1"/>
</dbReference>
<dbReference type="Gene3D" id="3.30.420.40">
    <property type="match status" value="2"/>
</dbReference>
<dbReference type="Gene3D" id="3.90.640.10">
    <property type="entry name" value="Actin, Chain A, domain 4"/>
    <property type="match status" value="1"/>
</dbReference>
<dbReference type="Gene3D" id="2.60.34.10">
    <property type="entry name" value="Substrate Binding Domain Of DNAk, Chain A, domain 1"/>
    <property type="match status" value="1"/>
</dbReference>
<dbReference type="HAMAP" id="MF_00679">
    <property type="entry name" value="HscA"/>
    <property type="match status" value="1"/>
</dbReference>
<dbReference type="InterPro" id="IPR043129">
    <property type="entry name" value="ATPase_NBD"/>
</dbReference>
<dbReference type="InterPro" id="IPR018181">
    <property type="entry name" value="Heat_shock_70_CS"/>
</dbReference>
<dbReference type="InterPro" id="IPR029048">
    <property type="entry name" value="HSP70_C_sf"/>
</dbReference>
<dbReference type="InterPro" id="IPR029047">
    <property type="entry name" value="HSP70_peptide-bd_sf"/>
</dbReference>
<dbReference type="InterPro" id="IPR013126">
    <property type="entry name" value="Hsp_70_fam"/>
</dbReference>
<dbReference type="InterPro" id="IPR010236">
    <property type="entry name" value="ISC_FeS_clus_asmbl_HscA"/>
</dbReference>
<dbReference type="NCBIfam" id="TIGR01991">
    <property type="entry name" value="HscA"/>
    <property type="match status" value="1"/>
</dbReference>
<dbReference type="NCBIfam" id="NF003520">
    <property type="entry name" value="PRK05183.1"/>
    <property type="match status" value="1"/>
</dbReference>
<dbReference type="PANTHER" id="PTHR19375">
    <property type="entry name" value="HEAT SHOCK PROTEIN 70KDA"/>
    <property type="match status" value="1"/>
</dbReference>
<dbReference type="Pfam" id="PF00012">
    <property type="entry name" value="HSP70"/>
    <property type="match status" value="1"/>
</dbReference>
<dbReference type="PRINTS" id="PR00301">
    <property type="entry name" value="HEATSHOCK70"/>
</dbReference>
<dbReference type="SUPFAM" id="SSF53067">
    <property type="entry name" value="Actin-like ATPase domain"/>
    <property type="match status" value="2"/>
</dbReference>
<dbReference type="SUPFAM" id="SSF100934">
    <property type="entry name" value="Heat shock protein 70kD (HSP70), C-terminal subdomain"/>
    <property type="match status" value="1"/>
</dbReference>
<dbReference type="SUPFAM" id="SSF100920">
    <property type="entry name" value="Heat shock protein 70kD (HSP70), peptide-binding domain"/>
    <property type="match status" value="1"/>
</dbReference>
<dbReference type="PROSITE" id="PS00297">
    <property type="entry name" value="HSP70_1"/>
    <property type="match status" value="1"/>
</dbReference>
<dbReference type="PROSITE" id="PS00329">
    <property type="entry name" value="HSP70_2"/>
    <property type="match status" value="1"/>
</dbReference>
<dbReference type="PROSITE" id="PS01036">
    <property type="entry name" value="HSP70_3"/>
    <property type="match status" value="1"/>
</dbReference>
<protein>
    <recommendedName>
        <fullName evidence="1">Chaperone protein HscA homolog</fullName>
    </recommendedName>
</protein>
<sequence length="622" mass="65796">MALLQISEPGMAPAPHQRRLAVGIDLGTTNSLVAAVRNSIPEALPDDAGRVLLPSVVRYLDKGGRRIGHAAKEEAAIDPRNTIVSVKRFMGRGKAEVEGAANAPYEFVDAPGMVQIRTVDGVKSPVEVSAEILATLRQRAEDTLGDDLVGAVITVPAYFDDAQRQATKDAARLAGLNVLRLLNEPTAAAIAYGLDNGAEGLYAVYDLGGGTFDLSILKLTKGVFEVLAAGGDSALGGDDFDHLLFEHVLAQAGLEVAALAPEDVRLLLDRVRGAKEALSAAPQARVDVKLSTGEKLAQTITRDTFAALVEPLVQRTLGPTRKALRDAQVSAADIKGVVLVGGATRMPVIRDAVAKYFGQPPLVNLDPDQVVALGAAIQADLLAGNRSGGDDWLLLDVIPLSLGVETMGGLVEKIIPRNSTIPVARAQEFTTFKDGQTAMAIHVVQGERELVSDCRSLARFELRGIPPMTAGAARIRVTYQVDADGLLSVFAREQHSGVEASVVVKPSYGLGDDDIARMLEDSFKTAEVDMRARALREAQVEAQRLVEATEAALVADGDLLDASERATVDALVASLRALAPGDDADAIDTATKALAEGTDEFAARRMDKSIKRALAGRKLDEI</sequence>